<proteinExistence type="inferred from homology"/>
<comment type="function">
    <text evidence="1">Cleaves the N-terminal amino acid of tripeptides.</text>
</comment>
<comment type="catalytic activity">
    <reaction evidence="1">
        <text>Release of the N-terminal residue from a tripeptide.</text>
        <dbReference type="EC" id="3.4.11.4"/>
    </reaction>
</comment>
<comment type="cofactor">
    <cofactor evidence="1">
        <name>Zn(2+)</name>
        <dbReference type="ChEBI" id="CHEBI:29105"/>
    </cofactor>
    <text evidence="1">Binds 2 Zn(2+) ions per subunit.</text>
</comment>
<comment type="subcellular location">
    <subcellularLocation>
        <location evidence="1">Cytoplasm</location>
    </subcellularLocation>
</comment>
<comment type="similarity">
    <text evidence="1">Belongs to the peptidase M20B family.</text>
</comment>
<evidence type="ECO:0000255" key="1">
    <source>
        <dbReference type="HAMAP-Rule" id="MF_00550"/>
    </source>
</evidence>
<organism>
    <name type="scientific">Clostridium perfringens (strain SM101 / Type A)</name>
    <dbReference type="NCBI Taxonomy" id="289380"/>
    <lineage>
        <taxon>Bacteria</taxon>
        <taxon>Bacillati</taxon>
        <taxon>Bacillota</taxon>
        <taxon>Clostridia</taxon>
        <taxon>Eubacteriales</taxon>
        <taxon>Clostridiaceae</taxon>
        <taxon>Clostridium</taxon>
    </lineage>
</organism>
<accession>Q0SWT9</accession>
<name>PEPT_CLOPS</name>
<dbReference type="EC" id="3.4.11.4" evidence="1"/>
<dbReference type="EMBL" id="CP000312">
    <property type="protein sequence ID" value="ABG87285.1"/>
    <property type="molecule type" value="Genomic_DNA"/>
</dbReference>
<dbReference type="RefSeq" id="WP_011591212.1">
    <property type="nucleotide sequence ID" value="NC_008262.1"/>
</dbReference>
<dbReference type="SMR" id="Q0SWT9"/>
<dbReference type="MEROPS" id="M20.003"/>
<dbReference type="KEGG" id="cpr:CPR_0029"/>
<dbReference type="Proteomes" id="UP000001824">
    <property type="component" value="Chromosome"/>
</dbReference>
<dbReference type="GO" id="GO:0005829">
    <property type="term" value="C:cytosol"/>
    <property type="evidence" value="ECO:0007669"/>
    <property type="project" value="TreeGrafter"/>
</dbReference>
<dbReference type="GO" id="GO:0008237">
    <property type="term" value="F:metallopeptidase activity"/>
    <property type="evidence" value="ECO:0007669"/>
    <property type="project" value="UniProtKB-KW"/>
</dbReference>
<dbReference type="GO" id="GO:0045148">
    <property type="term" value="F:tripeptide aminopeptidase activity"/>
    <property type="evidence" value="ECO:0007669"/>
    <property type="project" value="UniProtKB-UniRule"/>
</dbReference>
<dbReference type="GO" id="GO:0008270">
    <property type="term" value="F:zinc ion binding"/>
    <property type="evidence" value="ECO:0007669"/>
    <property type="project" value="UniProtKB-UniRule"/>
</dbReference>
<dbReference type="GO" id="GO:0043171">
    <property type="term" value="P:peptide catabolic process"/>
    <property type="evidence" value="ECO:0007669"/>
    <property type="project" value="UniProtKB-UniRule"/>
</dbReference>
<dbReference type="GO" id="GO:0006508">
    <property type="term" value="P:proteolysis"/>
    <property type="evidence" value="ECO:0007669"/>
    <property type="project" value="UniProtKB-UniRule"/>
</dbReference>
<dbReference type="CDD" id="cd03892">
    <property type="entry name" value="M20_peptT"/>
    <property type="match status" value="1"/>
</dbReference>
<dbReference type="FunFam" id="3.30.70.360:FF:000002">
    <property type="entry name" value="Peptidase T"/>
    <property type="match status" value="1"/>
</dbReference>
<dbReference type="Gene3D" id="3.30.70.360">
    <property type="match status" value="1"/>
</dbReference>
<dbReference type="Gene3D" id="3.40.630.10">
    <property type="entry name" value="Zn peptidases"/>
    <property type="match status" value="1"/>
</dbReference>
<dbReference type="HAMAP" id="MF_00550">
    <property type="entry name" value="Aminopeptidase_M20"/>
    <property type="match status" value="1"/>
</dbReference>
<dbReference type="InterPro" id="IPR001261">
    <property type="entry name" value="ArgE/DapE_CS"/>
</dbReference>
<dbReference type="InterPro" id="IPR036264">
    <property type="entry name" value="Bact_exopeptidase_dim_dom"/>
</dbReference>
<dbReference type="InterPro" id="IPR002933">
    <property type="entry name" value="Peptidase_M20"/>
</dbReference>
<dbReference type="InterPro" id="IPR011650">
    <property type="entry name" value="Peptidase_M20_dimer"/>
</dbReference>
<dbReference type="InterPro" id="IPR010161">
    <property type="entry name" value="Peptidase_M20B"/>
</dbReference>
<dbReference type="NCBIfam" id="TIGR01882">
    <property type="entry name" value="peptidase-T"/>
    <property type="match status" value="1"/>
</dbReference>
<dbReference type="NCBIfam" id="NF003976">
    <property type="entry name" value="PRK05469.1"/>
    <property type="match status" value="1"/>
</dbReference>
<dbReference type="NCBIfam" id="NF009920">
    <property type="entry name" value="PRK13381.1"/>
    <property type="match status" value="1"/>
</dbReference>
<dbReference type="PANTHER" id="PTHR42994">
    <property type="entry name" value="PEPTIDASE T"/>
    <property type="match status" value="1"/>
</dbReference>
<dbReference type="PANTHER" id="PTHR42994:SF1">
    <property type="entry name" value="PEPTIDASE T"/>
    <property type="match status" value="1"/>
</dbReference>
<dbReference type="Pfam" id="PF07687">
    <property type="entry name" value="M20_dimer"/>
    <property type="match status" value="1"/>
</dbReference>
<dbReference type="Pfam" id="PF01546">
    <property type="entry name" value="Peptidase_M20"/>
    <property type="match status" value="1"/>
</dbReference>
<dbReference type="PIRSF" id="PIRSF037215">
    <property type="entry name" value="Peptidase_M20B"/>
    <property type="match status" value="1"/>
</dbReference>
<dbReference type="SUPFAM" id="SSF55031">
    <property type="entry name" value="Bacterial exopeptidase dimerisation domain"/>
    <property type="match status" value="1"/>
</dbReference>
<dbReference type="SUPFAM" id="SSF53187">
    <property type="entry name" value="Zn-dependent exopeptidases"/>
    <property type="match status" value="1"/>
</dbReference>
<dbReference type="PROSITE" id="PS00758">
    <property type="entry name" value="ARGE_DAPE_CPG2_1"/>
    <property type="match status" value="1"/>
</dbReference>
<dbReference type="PROSITE" id="PS00759">
    <property type="entry name" value="ARGE_DAPE_CPG2_2"/>
    <property type="match status" value="1"/>
</dbReference>
<reference key="1">
    <citation type="journal article" date="2006" name="Genome Res.">
        <title>Skewed genomic variability in strains of the toxigenic bacterial pathogen, Clostridium perfringens.</title>
        <authorList>
            <person name="Myers G.S.A."/>
            <person name="Rasko D.A."/>
            <person name="Cheung J.K."/>
            <person name="Ravel J."/>
            <person name="Seshadri R."/>
            <person name="DeBoy R.T."/>
            <person name="Ren Q."/>
            <person name="Varga J."/>
            <person name="Awad M.M."/>
            <person name="Brinkac L.M."/>
            <person name="Daugherty S.C."/>
            <person name="Haft D.H."/>
            <person name="Dodson R.J."/>
            <person name="Madupu R."/>
            <person name="Nelson W.C."/>
            <person name="Rosovitz M.J."/>
            <person name="Sullivan S.A."/>
            <person name="Khouri H."/>
            <person name="Dimitrov G.I."/>
            <person name="Watkins K.L."/>
            <person name="Mulligan S."/>
            <person name="Benton J."/>
            <person name="Radune D."/>
            <person name="Fisher D.J."/>
            <person name="Atkins H.S."/>
            <person name="Hiscox T."/>
            <person name="Jost B.H."/>
            <person name="Billington S.J."/>
            <person name="Songer J.G."/>
            <person name="McClane B.A."/>
            <person name="Titball R.W."/>
            <person name="Rood J.I."/>
            <person name="Melville S.B."/>
            <person name="Paulsen I.T."/>
        </authorList>
    </citation>
    <scope>NUCLEOTIDE SEQUENCE [LARGE SCALE GENOMIC DNA]</scope>
    <source>
        <strain>SM101 / Type A</strain>
    </source>
</reference>
<keyword id="KW-0031">Aminopeptidase</keyword>
<keyword id="KW-0963">Cytoplasm</keyword>
<keyword id="KW-0378">Hydrolase</keyword>
<keyword id="KW-0479">Metal-binding</keyword>
<keyword id="KW-0482">Metalloprotease</keyword>
<keyword id="KW-0645">Protease</keyword>
<keyword id="KW-0862">Zinc</keyword>
<gene>
    <name evidence="1" type="primary">pepT</name>
    <name type="ordered locus">CPR_0029</name>
</gene>
<sequence>MKKVHERFLEYVKVDTKSDETTRVTPSTKGQLELGKILAEELKKIGVDEVRISDKGYVYACLKSNCDKDIPKIGFISHMDTAPDMSGKNVNPKIVENYDGKDIELGNGYTLSPSFSPELPMYKGQTLITTDGTTLLGADDKAGVAEIITAIEYLINHPEIKHGDIKIGFTPDEEIGEGADHFDVEGFGADFAYTLDGGRIGELEYENFNAASAKVEIIGKNVHPGSAKGKMINSILVAHEFVSMLPLNEVPEKTEGYEGFSFLLDIQGEVEKTSLSFIIRDFDKEGFKNRKERFNEIANELNKKYGEGTVTVTLKDQYMNMKEMIEPRMHIVETAEKAMKQCGIEPIKKPIRGGTDGARLSFMGLPTPNIFTGGENFHGRYEYISVNSMEKAVEVILNIIKIYAEK</sequence>
<feature type="chain" id="PRO_0000274012" description="Peptidase T">
    <location>
        <begin position="1"/>
        <end position="406"/>
    </location>
</feature>
<feature type="active site" evidence="1">
    <location>
        <position position="80"/>
    </location>
</feature>
<feature type="active site" description="Proton acceptor" evidence="1">
    <location>
        <position position="173"/>
    </location>
</feature>
<feature type="binding site" evidence="1">
    <location>
        <position position="78"/>
    </location>
    <ligand>
        <name>Zn(2+)</name>
        <dbReference type="ChEBI" id="CHEBI:29105"/>
        <label>1</label>
    </ligand>
</feature>
<feature type="binding site" evidence="1">
    <location>
        <position position="139"/>
    </location>
    <ligand>
        <name>Zn(2+)</name>
        <dbReference type="ChEBI" id="CHEBI:29105"/>
        <label>1</label>
    </ligand>
</feature>
<feature type="binding site" evidence="1">
    <location>
        <position position="139"/>
    </location>
    <ligand>
        <name>Zn(2+)</name>
        <dbReference type="ChEBI" id="CHEBI:29105"/>
        <label>2</label>
    </ligand>
</feature>
<feature type="binding site" evidence="1">
    <location>
        <position position="174"/>
    </location>
    <ligand>
        <name>Zn(2+)</name>
        <dbReference type="ChEBI" id="CHEBI:29105"/>
        <label>2</label>
    </ligand>
</feature>
<feature type="binding site" evidence="1">
    <location>
        <position position="196"/>
    </location>
    <ligand>
        <name>Zn(2+)</name>
        <dbReference type="ChEBI" id="CHEBI:29105"/>
        <label>1</label>
    </ligand>
</feature>
<feature type="binding site" evidence="1">
    <location>
        <position position="378"/>
    </location>
    <ligand>
        <name>Zn(2+)</name>
        <dbReference type="ChEBI" id="CHEBI:29105"/>
        <label>2</label>
    </ligand>
</feature>
<protein>
    <recommendedName>
        <fullName evidence="1">Peptidase T</fullName>
        <ecNumber evidence="1">3.4.11.4</ecNumber>
    </recommendedName>
    <alternativeName>
        <fullName evidence="1">Aminotripeptidase</fullName>
        <shortName evidence="1">Tripeptidase</shortName>
    </alternativeName>
    <alternativeName>
        <fullName evidence="1">Tripeptide aminopeptidase</fullName>
    </alternativeName>
</protein>